<evidence type="ECO:0000255" key="1">
    <source>
        <dbReference type="PROSITE-ProRule" id="PRU00456"/>
    </source>
</evidence>
<evidence type="ECO:0000269" key="2">
    <source>
    </source>
</evidence>
<evidence type="ECO:0000269" key="3">
    <source>
    </source>
</evidence>
<evidence type="ECO:0000269" key="4">
    <source>
    </source>
</evidence>
<evidence type="ECO:0000269" key="5">
    <source>
    </source>
</evidence>
<evidence type="ECO:0000269" key="6">
    <source>
    </source>
</evidence>
<evidence type="ECO:0000269" key="7">
    <source>
    </source>
</evidence>
<evidence type="ECO:0000269" key="8">
    <source>
    </source>
</evidence>
<evidence type="ECO:0000269" key="9">
    <source>
    </source>
</evidence>
<evidence type="ECO:0000269" key="10">
    <source>
    </source>
</evidence>
<evidence type="ECO:0000269" key="11">
    <source>
    </source>
</evidence>
<evidence type="ECO:0000269" key="12">
    <source>
    </source>
</evidence>
<evidence type="ECO:0000269" key="13">
    <source>
    </source>
</evidence>
<evidence type="ECO:0000269" key="14">
    <source>
    </source>
</evidence>
<evidence type="ECO:0000303" key="15">
    <source>
    </source>
</evidence>
<evidence type="ECO:0000305" key="16"/>
<evidence type="ECO:0000312" key="17">
    <source>
        <dbReference type="SGD" id="S000007587"/>
    </source>
</evidence>
<evidence type="ECO:0007744" key="18">
    <source>
        <dbReference type="PDB" id="1YOP"/>
    </source>
</evidence>
<evidence type="ECO:0007744" key="19">
    <source>
        <dbReference type="PDB" id="4D4O"/>
    </source>
</evidence>
<evidence type="ECO:0007744" key="20">
    <source>
        <dbReference type="PDB" id="4D4P"/>
    </source>
</evidence>
<evidence type="ECO:0007744" key="21">
    <source>
        <dbReference type="PDB" id="4X33"/>
    </source>
</evidence>
<evidence type="ECO:0007744" key="22">
    <source>
        <dbReference type="PDB" id="5AX2"/>
    </source>
</evidence>
<evidence type="ECO:0007829" key="23">
    <source>
        <dbReference type="PDB" id="4D4O"/>
    </source>
</evidence>
<evidence type="ECO:0007829" key="24">
    <source>
        <dbReference type="PDB" id="4X33"/>
    </source>
</evidence>
<evidence type="ECO:0007829" key="25">
    <source>
        <dbReference type="PDB" id="5AX2"/>
    </source>
</evidence>
<dbReference type="EMBL" id="Z35832">
    <property type="status" value="NOT_ANNOTATED_CDS"/>
    <property type="molecule type" value="Genomic_DNA"/>
</dbReference>
<dbReference type="EMBL" id="BK006936">
    <property type="protein sequence ID" value="DAA07051.1"/>
    <property type="molecule type" value="Genomic_DNA"/>
</dbReference>
<dbReference type="RefSeq" id="NP_660100.1">
    <property type="nucleotide sequence ID" value="NM_001184454.1"/>
</dbReference>
<dbReference type="PDB" id="1YOP">
    <property type="method" value="NMR"/>
    <property type="chains" value="A=1-82"/>
</dbReference>
<dbReference type="PDB" id="1YWS">
    <property type="method" value="NMR"/>
    <property type="chains" value="A=1-82"/>
</dbReference>
<dbReference type="PDB" id="4D4O">
    <property type="method" value="X-ray"/>
    <property type="resolution" value="2.90 A"/>
    <property type="chains" value="A/B/C=1-82"/>
</dbReference>
<dbReference type="PDB" id="4D4P">
    <property type="method" value="X-ray"/>
    <property type="resolution" value="3.00 A"/>
    <property type="chains" value="A/B/C/E/G/H=1-82"/>
</dbReference>
<dbReference type="PDB" id="4X33">
    <property type="method" value="X-ray"/>
    <property type="resolution" value="1.45 A"/>
    <property type="chains" value="A=1-57"/>
</dbReference>
<dbReference type="PDB" id="5AX2">
    <property type="method" value="X-ray"/>
    <property type="resolution" value="2.40 A"/>
    <property type="chains" value="A=2-78"/>
</dbReference>
<dbReference type="PDBsum" id="1YOP"/>
<dbReference type="PDBsum" id="1YWS"/>
<dbReference type="PDBsum" id="4D4O"/>
<dbReference type="PDBsum" id="4D4P"/>
<dbReference type="PDBsum" id="4X33"/>
<dbReference type="PDBsum" id="5AX2"/>
<dbReference type="SMR" id="Q3E840"/>
<dbReference type="BioGRID" id="32630">
    <property type="interactions" value="146"/>
</dbReference>
<dbReference type="DIP" id="DIP-52225N"/>
<dbReference type="FunCoup" id="Q3E840">
    <property type="interactions" value="392"/>
</dbReference>
<dbReference type="IntAct" id="Q3E840">
    <property type="interactions" value="10"/>
</dbReference>
<dbReference type="MINT" id="Q3E840"/>
<dbReference type="STRING" id="4932.YBL071W-A"/>
<dbReference type="PaxDb" id="4932-YBL071W-A"/>
<dbReference type="PeptideAtlas" id="Q3E840"/>
<dbReference type="EnsemblFungi" id="YBL071W-A_mRNA">
    <property type="protein sequence ID" value="YBL071W-A"/>
    <property type="gene ID" value="YBL071W-A"/>
</dbReference>
<dbReference type="GeneID" id="852207"/>
<dbReference type="KEGG" id="sce:YBL071W-A"/>
<dbReference type="AGR" id="SGD:S000007587"/>
<dbReference type="SGD" id="S000007587">
    <property type="gene designation" value="KTI11"/>
</dbReference>
<dbReference type="VEuPathDB" id="FungiDB:YBL071W-A"/>
<dbReference type="eggNOG" id="KOG2923">
    <property type="taxonomic scope" value="Eukaryota"/>
</dbReference>
<dbReference type="HOGENOM" id="CLU_155991_4_1_1"/>
<dbReference type="InParanoid" id="Q3E840"/>
<dbReference type="OMA" id="LFTYPCP"/>
<dbReference type="OrthoDB" id="66964at2759"/>
<dbReference type="BioCyc" id="MetaCyc:MONOMER-15580"/>
<dbReference type="BioCyc" id="YEAST:MONOMER-15580"/>
<dbReference type="Reactome" id="R-SCE-5358493">
    <property type="pathway name" value="Synthesis of diphthamide-EEF2"/>
</dbReference>
<dbReference type="UniPathway" id="UPA00559"/>
<dbReference type="BioGRID-ORCS" id="852207">
    <property type="hits" value="5 hits in 10 CRISPR screens"/>
</dbReference>
<dbReference type="EvolutionaryTrace" id="Q3E840"/>
<dbReference type="PRO" id="PR:Q3E840"/>
<dbReference type="Proteomes" id="UP000002311">
    <property type="component" value="Chromosome II"/>
</dbReference>
<dbReference type="RNAct" id="Q3E840">
    <property type="molecule type" value="protein"/>
</dbReference>
<dbReference type="GO" id="GO:0005737">
    <property type="term" value="C:cytoplasm"/>
    <property type="evidence" value="ECO:0000314"/>
    <property type="project" value="SGD"/>
</dbReference>
<dbReference type="GO" id="GO:0005829">
    <property type="term" value="C:cytosol"/>
    <property type="evidence" value="ECO:0000314"/>
    <property type="project" value="SGD"/>
</dbReference>
<dbReference type="GO" id="GO:0005634">
    <property type="term" value="C:nucleus"/>
    <property type="evidence" value="ECO:0000314"/>
    <property type="project" value="SGD"/>
</dbReference>
<dbReference type="GO" id="GO:0090560">
    <property type="term" value="F:2-(3-amino-3-carboxypropyl)histidine synthase activity"/>
    <property type="evidence" value="ECO:0000314"/>
    <property type="project" value="UniProtKB"/>
</dbReference>
<dbReference type="GO" id="GO:0008198">
    <property type="term" value="F:ferrous iron binding"/>
    <property type="evidence" value="ECO:0000314"/>
    <property type="project" value="UniProtKB"/>
</dbReference>
<dbReference type="GO" id="GO:0034986">
    <property type="term" value="F:iron chaperone activity"/>
    <property type="evidence" value="ECO:0000314"/>
    <property type="project" value="UniProtKB"/>
</dbReference>
<dbReference type="GO" id="GO:0005506">
    <property type="term" value="F:iron ion binding"/>
    <property type="evidence" value="ECO:0000314"/>
    <property type="project" value="SGD"/>
</dbReference>
<dbReference type="GO" id="GO:0016730">
    <property type="term" value="F:oxidoreductase activity, acting on iron-sulfur proteins as donors"/>
    <property type="evidence" value="ECO:0000314"/>
    <property type="project" value="SGD"/>
</dbReference>
<dbReference type="GO" id="GO:0008270">
    <property type="term" value="F:zinc ion binding"/>
    <property type="evidence" value="ECO:0000314"/>
    <property type="project" value="SGD"/>
</dbReference>
<dbReference type="GO" id="GO:0017183">
    <property type="term" value="P:protein histidyl modification to diphthamide"/>
    <property type="evidence" value="ECO:0000314"/>
    <property type="project" value="UniProtKB"/>
</dbReference>
<dbReference type="GO" id="GO:0002926">
    <property type="term" value="P:tRNA wobble base 5-methoxycarbonylmethyl-2-thiouridinylation"/>
    <property type="evidence" value="ECO:0000315"/>
    <property type="project" value="UniProtKB"/>
</dbReference>
<dbReference type="GO" id="GO:0002098">
    <property type="term" value="P:tRNA wobble uridine modification"/>
    <property type="evidence" value="ECO:0000315"/>
    <property type="project" value="SGD"/>
</dbReference>
<dbReference type="DisProt" id="DP01653"/>
<dbReference type="FunFam" id="3.10.660.10:FF:000001">
    <property type="entry name" value="Diphthamide biosynthesis 3"/>
    <property type="match status" value="1"/>
</dbReference>
<dbReference type="Gene3D" id="3.10.660.10">
    <property type="entry name" value="DPH Zinc finger"/>
    <property type="match status" value="1"/>
</dbReference>
<dbReference type="InterPro" id="IPR044248">
    <property type="entry name" value="DPH3/4-like"/>
</dbReference>
<dbReference type="InterPro" id="IPR007872">
    <property type="entry name" value="DPH_MB_dom"/>
</dbReference>
<dbReference type="InterPro" id="IPR036671">
    <property type="entry name" value="DPH_MB_sf"/>
</dbReference>
<dbReference type="PANTHER" id="PTHR21454:SF31">
    <property type="entry name" value="DIPHTHAMIDE BIOSYNTHESIS PROTEIN 3"/>
    <property type="match status" value="1"/>
</dbReference>
<dbReference type="PANTHER" id="PTHR21454">
    <property type="entry name" value="DPH3 HOMOLOG-RELATED"/>
    <property type="match status" value="1"/>
</dbReference>
<dbReference type="Pfam" id="PF05207">
    <property type="entry name" value="Zn_ribbon_CSL"/>
    <property type="match status" value="1"/>
</dbReference>
<dbReference type="SUPFAM" id="SSF144217">
    <property type="entry name" value="CSL zinc finger"/>
    <property type="match status" value="1"/>
</dbReference>
<dbReference type="PROSITE" id="PS51074">
    <property type="entry name" value="DPH_MB"/>
    <property type="match status" value="1"/>
</dbReference>
<accession>Q3E840</accession>
<accession>D6VPT1</accession>
<organism>
    <name type="scientific">Saccharomyces cerevisiae (strain ATCC 204508 / S288c)</name>
    <name type="common">Baker's yeast</name>
    <dbReference type="NCBI Taxonomy" id="559292"/>
    <lineage>
        <taxon>Eukaryota</taxon>
        <taxon>Fungi</taxon>
        <taxon>Dikarya</taxon>
        <taxon>Ascomycota</taxon>
        <taxon>Saccharomycotina</taxon>
        <taxon>Saccharomycetes</taxon>
        <taxon>Saccharomycetales</taxon>
        <taxon>Saccharomycetaceae</taxon>
        <taxon>Saccharomyces</taxon>
    </lineage>
</organism>
<proteinExistence type="evidence at protein level"/>
<feature type="chain" id="PRO_0000082639" description="Diphthamide biosynthesis protein 3">
    <location>
        <begin position="1"/>
        <end position="82"/>
    </location>
</feature>
<feature type="domain" description="DPH-type MB" evidence="1">
    <location>
        <begin position="3"/>
        <end position="59"/>
    </location>
</feature>
<feature type="region of interest" description="Required for interaction with the elongator complex" evidence="6">
    <location>
        <begin position="66"/>
        <end position="82"/>
    </location>
</feature>
<feature type="binding site" evidence="10 11 19 20 21">
    <location>
        <position position="25"/>
    </location>
    <ligand>
        <name>Fe cation</name>
        <dbReference type="ChEBI" id="CHEBI:24875"/>
    </ligand>
</feature>
<feature type="binding site" evidence="10 11 19 20 21">
    <location>
        <position position="27"/>
    </location>
    <ligand>
        <name>Fe cation</name>
        <dbReference type="ChEBI" id="CHEBI:24875"/>
    </ligand>
</feature>
<feature type="binding site" evidence="10 11 19 20 21">
    <location>
        <position position="47"/>
    </location>
    <ligand>
        <name>Fe cation</name>
        <dbReference type="ChEBI" id="CHEBI:24875"/>
    </ligand>
</feature>
<feature type="binding site" evidence="10 11 19 20 21">
    <location>
        <position position="50"/>
    </location>
    <ligand>
        <name>Fe cation</name>
        <dbReference type="ChEBI" id="CHEBI:24875"/>
    </ligand>
</feature>
<feature type="mutagenesis site" description="Impaired interaction with ATS1/KTI13." evidence="10">
    <original>Y</original>
    <variation>A</variation>
    <location>
        <position position="4"/>
    </location>
</feature>
<feature type="mutagenesis site" description="Impaired interaction with ATS1/KTI13." evidence="10">
    <original>D</original>
    <variation>A</variation>
    <location>
        <position position="5"/>
    </location>
</feature>
<feature type="mutagenesis site" description="Little or no effect on interaction with ATS1/KTI13." evidence="10">
    <original>E</original>
    <variation>A</variation>
    <location>
        <position position="8"/>
    </location>
</feature>
<feature type="mutagenesis site" description="Resistance to zymocin. Sensitive to thermal stress, diphtheria toxin, and caffeine." evidence="6">
    <original>V</original>
    <variation>G</variation>
    <location>
        <position position="56"/>
    </location>
</feature>
<feature type="mutagenesis site" description="Decreases interaction with elongator complex subunits ELP2 and ELP5. Resistance to zymocin. Sensitive to thermal stress and caffeine. Normal sensitivity to diphtheria toxin and interaction with ATS1/KTI13." evidence="6">
    <location>
        <begin position="66"/>
        <end position="82"/>
    </location>
</feature>
<feature type="strand" evidence="24">
    <location>
        <begin position="4"/>
        <end position="8"/>
    </location>
</feature>
<feature type="helix" evidence="24">
    <location>
        <begin position="9"/>
        <end position="11"/>
    </location>
</feature>
<feature type="strand" evidence="24">
    <location>
        <begin position="12"/>
        <end position="15"/>
    </location>
</feature>
<feature type="turn" evidence="24">
    <location>
        <begin position="16"/>
        <end position="19"/>
    </location>
</feature>
<feature type="strand" evidence="24">
    <location>
        <begin position="20"/>
        <end position="24"/>
    </location>
</feature>
<feature type="strand" evidence="24">
    <location>
        <begin position="28"/>
        <end position="34"/>
    </location>
</feature>
<feature type="helix" evidence="24">
    <location>
        <begin position="35"/>
        <end position="39"/>
    </location>
</feature>
<feature type="strand" evidence="24">
    <location>
        <begin position="44"/>
        <end position="46"/>
    </location>
</feature>
<feature type="strand" evidence="23">
    <location>
        <begin position="48"/>
        <end position="51"/>
    </location>
</feature>
<feature type="strand" evidence="24">
    <location>
        <begin position="53"/>
        <end position="57"/>
    </location>
</feature>
<feature type="helix" evidence="25">
    <location>
        <begin position="60"/>
        <end position="70"/>
    </location>
</feature>
<name>DPH3_YEAST</name>
<keyword id="KW-0002">3D-structure</keyword>
<keyword id="KW-0963">Cytoplasm</keyword>
<keyword id="KW-0408">Iron</keyword>
<keyword id="KW-0479">Metal-binding</keyword>
<keyword id="KW-0539">Nucleus</keyword>
<keyword id="KW-0560">Oxidoreductase</keyword>
<keyword id="KW-1185">Reference proteome</keyword>
<keyword id="KW-0819">tRNA processing</keyword>
<reference key="1">
    <citation type="journal article" date="1994" name="EMBO J.">
        <title>Complete DNA sequence of yeast chromosome II.</title>
        <authorList>
            <person name="Feldmann H."/>
            <person name="Aigle M."/>
            <person name="Aljinovic G."/>
            <person name="Andre B."/>
            <person name="Baclet M.C."/>
            <person name="Barthe C."/>
            <person name="Baur A."/>
            <person name="Becam A.-M."/>
            <person name="Biteau N."/>
            <person name="Boles E."/>
            <person name="Brandt T."/>
            <person name="Brendel M."/>
            <person name="Brueckner M."/>
            <person name="Bussereau F."/>
            <person name="Christiansen C."/>
            <person name="Contreras R."/>
            <person name="Crouzet M."/>
            <person name="Cziepluch C."/>
            <person name="Demolis N."/>
            <person name="Delaveau T."/>
            <person name="Doignon F."/>
            <person name="Domdey H."/>
            <person name="Duesterhus S."/>
            <person name="Dubois E."/>
            <person name="Dujon B."/>
            <person name="El Bakkoury M."/>
            <person name="Entian K.-D."/>
            <person name="Feuermann M."/>
            <person name="Fiers W."/>
            <person name="Fobo G.M."/>
            <person name="Fritz C."/>
            <person name="Gassenhuber J."/>
            <person name="Glansdorff N."/>
            <person name="Goffeau A."/>
            <person name="Grivell L.A."/>
            <person name="de Haan M."/>
            <person name="Hein C."/>
            <person name="Herbert C.J."/>
            <person name="Hollenberg C.P."/>
            <person name="Holmstroem K."/>
            <person name="Jacq C."/>
            <person name="Jacquet M."/>
            <person name="Jauniaux J.-C."/>
            <person name="Jonniaux J.-L."/>
            <person name="Kallesoee T."/>
            <person name="Kiesau P."/>
            <person name="Kirchrath L."/>
            <person name="Koetter P."/>
            <person name="Korol S."/>
            <person name="Liebl S."/>
            <person name="Logghe M."/>
            <person name="Lohan A.J.E."/>
            <person name="Louis E.J."/>
            <person name="Li Z.Y."/>
            <person name="Maat M.J."/>
            <person name="Mallet L."/>
            <person name="Mannhaupt G."/>
            <person name="Messenguy F."/>
            <person name="Miosga T."/>
            <person name="Molemans F."/>
            <person name="Mueller S."/>
            <person name="Nasr F."/>
            <person name="Obermaier B."/>
            <person name="Perea J."/>
            <person name="Pierard A."/>
            <person name="Piravandi E."/>
            <person name="Pohl F.M."/>
            <person name="Pohl T.M."/>
            <person name="Potier S."/>
            <person name="Proft M."/>
            <person name="Purnelle B."/>
            <person name="Ramezani Rad M."/>
            <person name="Rieger M."/>
            <person name="Rose M."/>
            <person name="Schaaff-Gerstenschlaeger I."/>
            <person name="Scherens B."/>
            <person name="Schwarzlose C."/>
            <person name="Skala J."/>
            <person name="Slonimski P.P."/>
            <person name="Smits P.H.M."/>
            <person name="Souciet J.-L."/>
            <person name="Steensma H.Y."/>
            <person name="Stucka R."/>
            <person name="Urrestarazu L.A."/>
            <person name="van der Aart Q.J.M."/>
            <person name="Van Dyck L."/>
            <person name="Vassarotti A."/>
            <person name="Vetter I."/>
            <person name="Vierendeels F."/>
            <person name="Vissers S."/>
            <person name="Wagner G."/>
            <person name="de Wergifosse P."/>
            <person name="Wolfe K.H."/>
            <person name="Zagulski M."/>
            <person name="Zimmermann F.K."/>
            <person name="Mewes H.-W."/>
            <person name="Kleine K."/>
        </authorList>
    </citation>
    <scope>NUCLEOTIDE SEQUENCE [LARGE SCALE GENOMIC DNA]</scope>
    <source>
        <strain>ATCC 204508 / S288c</strain>
    </source>
</reference>
<reference key="2">
    <citation type="journal article" date="2014" name="G3 (Bethesda)">
        <title>The reference genome sequence of Saccharomyces cerevisiae: Then and now.</title>
        <authorList>
            <person name="Engel S.R."/>
            <person name="Dietrich F.S."/>
            <person name="Fisk D.G."/>
            <person name="Binkley G."/>
            <person name="Balakrishnan R."/>
            <person name="Costanzo M.C."/>
            <person name="Dwight S.S."/>
            <person name="Hitz B.C."/>
            <person name="Karra K."/>
            <person name="Nash R.S."/>
            <person name="Weng S."/>
            <person name="Wong E.D."/>
            <person name="Lloyd P."/>
            <person name="Skrzypek M.S."/>
            <person name="Miyasato S.R."/>
            <person name="Simison M."/>
            <person name="Cherry J.M."/>
        </authorList>
    </citation>
    <scope>GENOME REANNOTATION</scope>
    <source>
        <strain>ATCC 204508 / S288c</strain>
    </source>
</reference>
<reference key="3">
    <citation type="journal article" date="2003" name="Mol. Microbiol.">
        <title>Elongator's toxin-target (TOT) function is nuclear localization sequence dependent and suppressed by post-translational modification.</title>
        <authorList>
            <person name="Fichtner L."/>
            <person name="Jablonowski D."/>
            <person name="Schierhorn A."/>
            <person name="Kitamoto H.K."/>
            <person name="Stark M.J.R."/>
            <person name="Schaffrath R."/>
        </authorList>
    </citation>
    <scope>INTERACTION WITH DPH1; DPH2; ELP1; ELP2; ELP3; ELONGATION FACTOR 2; RPS7 AND RPS19</scope>
</reference>
<reference key="4">
    <citation type="journal article" date="2003" name="Nature">
        <title>Global analysis of protein localization in budding yeast.</title>
        <authorList>
            <person name="Huh W.-K."/>
            <person name="Falvo J.V."/>
            <person name="Gerke L.C."/>
            <person name="Carroll A.S."/>
            <person name="Howson R.W."/>
            <person name="Weissman J.S."/>
            <person name="O'Shea E.K."/>
        </authorList>
    </citation>
    <scope>SUBCELLULAR LOCATION [LARGE SCALE ANALYSIS]</scope>
</reference>
<reference key="5">
    <citation type="journal article" date="2003" name="Nature">
        <title>Global analysis of protein expression in yeast.</title>
        <authorList>
            <person name="Ghaemmaghami S."/>
            <person name="Huh W.-K."/>
            <person name="Bower K."/>
            <person name="Howson R.W."/>
            <person name="Belle A."/>
            <person name="Dephoure N."/>
            <person name="O'Shea E.K."/>
            <person name="Weissman J.S."/>
        </authorList>
    </citation>
    <scope>LEVEL OF PROTEIN EXPRESSION [LARGE SCALE ANALYSIS]</scope>
</reference>
<reference key="6">
    <citation type="journal article" date="2004" name="Mol. Cell. Biol.">
        <title>Identification of the proteins required for biosynthesis of diphthamide, the target of bacterial ADP-ribosylating toxins on translation elongation factor 2.</title>
        <authorList>
            <person name="Liu S."/>
            <person name="Milne G.T."/>
            <person name="Kuremsky J.G."/>
            <person name="Fink G.R."/>
            <person name="Leppla S.H."/>
        </authorList>
    </citation>
    <scope>FUNCTION</scope>
</reference>
<reference key="7">
    <citation type="journal article" date="2008" name="Mol. Microbiol.">
        <title>A versatile partner of eukaryotic protein complexes that is involved in multiple biological processes: Kti11/Dph3.</title>
        <authorList>
            <person name="Baer C."/>
            <person name="Zabel R."/>
            <person name="Liu S."/>
            <person name="Stark M.J."/>
            <person name="Schaffrath R."/>
        </authorList>
    </citation>
    <scope>FUNCTION</scope>
    <scope>IDENTIFICATION IN THE 2-(3-AMINO-3-CARBOXYPROPYL)HISTIDINE SYNTHASE COMPLEX</scope>
    <scope>INTERACTION WITH DPH1; DPH2; ELP2; ELP5 AND ATS1</scope>
    <scope>SUBCELLULAR LOCATION</scope>
    <scope>DISRUPTION PHENOTYPE</scope>
    <scope>MUTAGENESIS OF VAL-56 AND 66-TYR--ALA-82</scope>
</reference>
<reference key="8">
    <citation type="journal article" date="2009" name="J. Biol. Chem.">
        <title>An iron-sulfur cluster domain in Elp3 important for the structural integrity of elongator.</title>
        <authorList>
            <person name="Greenwood C."/>
            <person name="Selth L.A."/>
            <person name="Dirac-Svejstrup A.B."/>
            <person name="Svejstrup J.Q."/>
        </authorList>
    </citation>
    <scope>INTERACTION WITH THE ELONGATOR COMPLEX</scope>
</reference>
<reference key="9">
    <citation type="journal article" date="2013" name="Toxins">
        <title>Insights into diphthamide, key diphtheria toxin effector.</title>
        <authorList>
            <person name="Abdel-Fattah W."/>
            <person name="Scheidt V."/>
            <person name="Uthman S."/>
            <person name="Stark M.J."/>
            <person name="Schaffrath R."/>
        </authorList>
    </citation>
    <scope>INTERACTION WITH DPH1</scope>
</reference>
<reference key="10">
    <citation type="journal article" date="2014" name="J. Am. Chem. Soc.">
        <title>Dph3 is an electron donor for Dph1-Dph2 in the first step of eukaryotic diphthamide biosynthesis.</title>
        <authorList>
            <person name="Dong M."/>
            <person name="Su X."/>
            <person name="Dzikovski B."/>
            <person name="Dando E.E."/>
            <person name="Zhu X."/>
            <person name="Du J."/>
            <person name="Freed J.H."/>
            <person name="Lin H."/>
        </authorList>
    </citation>
    <scope>FUNCTION</scope>
    <scope>CATALYTIC ACTIVITY</scope>
    <scope>DOMAIN DPH-TYPE MB</scope>
</reference>
<reference key="11">
    <citation type="journal article" date="2016" name="Nat. Chem. Biol.">
        <title>Cbr1 is a Dph3 reductase required for the tRNA wobble uridine modification.</title>
        <authorList>
            <person name="Lin Z."/>
            <person name="Dong M."/>
            <person name="Zhang Y."/>
            <person name="Lee E.A."/>
            <person name="Lin H."/>
        </authorList>
    </citation>
    <scope>FUNCTION</scope>
    <scope>INTERACTION WITH ELP1; ELP2; ELP3; DPH1; DPH2; ATS1 AND CBR1</scope>
    <scope>DISRUPTION PHENOTYPE</scope>
</reference>
<reference key="12">
    <citation type="journal article" date="2019" name="J. Biol. Inorg. Chem.">
        <title>The asymmetric function of Dph1-Dph2 heterodimer in diphthamide biosynthesis.</title>
        <authorList>
            <person name="Dong M."/>
            <person name="Dando E.E."/>
            <person name="Kotliar I."/>
            <person name="Su X."/>
            <person name="Dzikovski B."/>
            <person name="Freed J.H."/>
            <person name="Lin H."/>
        </authorList>
    </citation>
    <scope>FUNCTION</scope>
</reference>
<reference key="13">
    <citation type="journal article" date="2021" name="J. Am. Chem. Soc.">
        <title>Dph3 Enables Aerobic Diphthamide Biosynthesis by Donating One Iron Atom to Transform a [3Fe-4S] to a [4Fe-4S] Cluster in Dph1-Dph2.</title>
        <authorList>
            <person name="Zhang Y."/>
            <person name="Su D."/>
            <person name="Dzikovski B."/>
            <person name="Majer S.H."/>
            <person name="Coleman R."/>
            <person name="Chandrasekaran S."/>
            <person name="Fenwick M.K."/>
            <person name="Crane B.R."/>
            <person name="Lancaster K.M."/>
            <person name="Freed J.H."/>
            <person name="Lin H."/>
        </authorList>
    </citation>
    <scope>FUNCTION</scope>
    <scope>CATALYTIC ACTIVITY</scope>
</reference>
<reference evidence="18" key="14">
    <citation type="journal article" date="2005" name="Biochemistry">
        <title>Solution structure of Kti11p from Saccharomyces cerevisiae reveals a novel zinc-binding module.</title>
        <authorList>
            <person name="Sun J."/>
            <person name="Zhang J."/>
            <person name="Wu F."/>
            <person name="Xu C."/>
            <person name="Li S."/>
            <person name="Zhao W."/>
            <person name="Wu Z."/>
            <person name="Wu J."/>
            <person name="Zhou C.-Z."/>
            <person name="Shi Y."/>
        </authorList>
    </citation>
    <scope>STRUCTURE BY NMR</scope>
    <scope>ZINC-BINDING</scope>
</reference>
<reference evidence="21" key="15">
    <citation type="journal article" date="2015" name="FEBS J.">
        <title>Structure of the Elongator cofactor complex Kti11/Kti13 provides insight into the role of Kti13 in Elongator-dependent tRNA modification.</title>
        <authorList>
            <person name="Kolaj-Robin O."/>
            <person name="McEwen A.G."/>
            <person name="Cavarelli J."/>
            <person name="Seraphin B."/>
        </authorList>
    </citation>
    <scope>X-RAY CRYSTALLOGRAPHY (1.45 ANGSTROMS) OF 1-57 IN COMPLEX WITH IRON AND ATS1</scope>
    <scope>INTERACTION WITH ATS1</scope>
</reference>
<reference evidence="19 20" key="16">
    <citation type="journal article" date="2015" name="Structure">
        <title>Structure of the Kti11/Kti13 heterodimer and its double role in modifications of tRNA and eukaryotic elongation factor 2.</title>
        <authorList>
            <person name="Glatt S."/>
            <person name="Zabel R."/>
            <person name="Vonkova I."/>
            <person name="Kumar A."/>
            <person name="Netz D.J."/>
            <person name="Pierik A.J."/>
            <person name="Rybin V."/>
            <person name="Lill R."/>
            <person name="Gavin A.C."/>
            <person name="Balbach J."/>
            <person name="Breunig K.D."/>
            <person name="Muller C.W."/>
        </authorList>
    </citation>
    <scope>X-RAY CRYSTALLOGRAPHY (2.90 ANGSTROMS) IN COMPLEX WITH IRON AND ATS1</scope>
    <scope>FUNCTION</scope>
    <scope>INTERACTION WITH ATS1</scope>
    <scope>MUTAGENESIS OF TYR-4; ASP-5 AND GLU-8</scope>
</reference>
<reference evidence="22" key="17">
    <citation type="journal article" date="2019" name="J. Phys. Chem. B">
        <title>Hyperbolic Pressure-Temperature Phase Diagram of the Zinc-Finger Protein apoKti11 Detected by NMR Spectroscopy.</title>
        <authorList>
            <person name="Klamt A."/>
            <person name="Nagarathinam K."/>
            <person name="Tanabe M."/>
            <person name="Kumar A."/>
            <person name="Balbach J."/>
        </authorList>
    </citation>
    <scope>X-RAY CRYSTALLOGRAPHY (2.40 ANGSTROMS) OF 2-78</scope>
</reference>
<comment type="function">
    <text evidence="5 6 9 10 12 13 14">Required for the first step of diphthamide biosynthesis, a post-translational modification of histidine which occurs in elongation factor 2 (PubMed:15485916, PubMed:18627462, PubMed:24422557, PubMed:25543256, PubMed:27694803, PubMed:31463593, PubMed:34154323). DPH1 and DPH2 transfer a 3-amino-3-carboxypropyl (ACP) group from S-adenosyl-L-methionine (SAM) to a histidine residue, the reaction is assisted by a reduction system comprising KTI11/DPH3 and a NADH-dependent reductase, predominantly CBR1 (PubMed:24422557, PubMed:27694803, PubMed:31463593, PubMed:34154323). Acts as an electron donor to reduce the Fe-S cluster in DPH1-DPH2 keeping the [4Fe-4S] clusters in the active and reduced state (PubMed:34154323). Restores iron to DPH1-DPH2 iron-sulfur clusters which have degraded from [4Fe-4S] to [3Fe-4S] by donating an iron atom to reform [4Fe-4S] clusters, in a manner dependent on the presence of elongation factor 2 and SAM (PubMed:34154323). Together with ATS1; associates with the elongator complex and is required for tRNA Wobble base modifications mediated by the elongator complex (PubMed:18627462, PubMed:25543256, PubMed:27694803). The elongator complex is required for multiple tRNA modifications, including mcm5U (5-methoxycarbonylmethyl uridine), mcm5s 2U (5-methoxycarbonylmethyl-2-thiouridine), and ncm5U (5-carbamoylmethyl uridine) (PubMed:25543256).</text>
</comment>
<comment type="catalytic activity">
    <reaction evidence="9">
        <text>[3Fe-4S](1+)-[protein] + Fe(2+)-[Dph3] = [3Fe-4S](0)-[protein] + Fe(3+)-[Dph3]</text>
        <dbReference type="Rhea" id="RHEA:71235"/>
        <dbReference type="Rhea" id="RHEA-COMP:17996"/>
        <dbReference type="Rhea" id="RHEA-COMP:17997"/>
        <dbReference type="Rhea" id="RHEA-COMP:18002"/>
        <dbReference type="Rhea" id="RHEA-COMP:18003"/>
        <dbReference type="ChEBI" id="CHEBI:29033"/>
        <dbReference type="ChEBI" id="CHEBI:29034"/>
        <dbReference type="ChEBI" id="CHEBI:33751"/>
        <dbReference type="ChEBI" id="CHEBI:47402"/>
        <dbReference type="ChEBI" id="CHEBI:83228"/>
    </reaction>
</comment>
<comment type="catalytic activity">
    <reaction evidence="14">
        <text>2 [3Fe-4S](0)-[protein] + 2 Fe(2+)-[Dph3] + NADH = 2 [4Fe-4S](1+)-[protein] + 2 [Dph3] + NAD(+) + H(+)</text>
        <dbReference type="Rhea" id="RHEA:71239"/>
        <dbReference type="Rhea" id="RHEA-COMP:17997"/>
        <dbReference type="Rhea" id="RHEA-COMP:17998"/>
        <dbReference type="Rhea" id="RHEA-COMP:18001"/>
        <dbReference type="Rhea" id="RHEA-COMP:18002"/>
        <dbReference type="ChEBI" id="CHEBI:15378"/>
        <dbReference type="ChEBI" id="CHEBI:29033"/>
        <dbReference type="ChEBI" id="CHEBI:33723"/>
        <dbReference type="ChEBI" id="CHEBI:47402"/>
        <dbReference type="ChEBI" id="CHEBI:57540"/>
        <dbReference type="ChEBI" id="CHEBI:57945"/>
        <dbReference type="ChEBI" id="CHEBI:83228"/>
    </reaction>
</comment>
<comment type="pathway">
    <text evidence="5">Protein modification; peptidyl-diphthamide biosynthesis.</text>
</comment>
<comment type="subunit">
    <text evidence="2 6 7 8 10 11 12">Component of the 2-(3-amino-3-carboxypropyl)histidine synthase complex composed of DPH1, DPH2, KTI11/DPH3 and a NADH-dependent reductase, predominantly CBR1 (PubMed:12940988, PubMed:18627462, PubMed:23645155, PubMed:27694803). Interacts with DPH1 (PubMed:12940988, PubMed:18627462, PubMed:23645155, PubMed:27694803). Interacts with DPH2 (PubMed:12940988, PubMed:18627462, PubMed:27694803). Interacts with CBR1 (PubMed:27694803). Interacts with elongation factor 2 (PubMed:12940988). Interacts with ATS1/KTI13; the interaction is direct (PubMed:18627462, PubMed:25543256, PubMed:25604895). Interacts with the 40S ribosomal protein RPS7A (PubMed:12940988). Interacts with the 40S ribosomal protein RPS19A (PubMed:12940988). Interacts with the elongator complex subunit IKI3/ELP1 (PubMed:12940988, PubMed:18986986, PubMed:27694803). Interacts with the elongator complex subunit ELP2 (PubMed:12940988, PubMed:18627462, PubMed:18986986, PubMed:27694803). Interacts with the elongator complex subunit ELP3 (PubMed:12940988, PubMed:18986986, PubMed:27694803). Interacts with the elongator complex subunit ELP5 (PubMed:18627462).</text>
</comment>
<comment type="interaction">
    <interactant intactId="EBI-2055307">
        <id>Q3E840</id>
    </interactant>
    <interactant intactId="EBI-2046012">
        <id>P31386</id>
        <label>ATS1</label>
    </interactant>
    <organismsDiffer>false</organismsDiffer>
    <experiments>10</experiments>
</comment>
<comment type="interaction">
    <interactant intactId="EBI-2055307">
        <id>Q3E840</id>
    </interactant>
    <interactant intactId="EBI-25162">
        <id>P40487</id>
        <label>DPH1</label>
    </interactant>
    <organismsDiffer>false</organismsDiffer>
    <experiments>2</experiments>
</comment>
<comment type="interaction">
    <interactant intactId="EBI-2055307">
        <id>Q3E840</id>
    </interactant>
    <interactant intactId="EBI-23459">
        <id>P42935</id>
        <label>ELP2</label>
    </interactant>
    <organismsDiffer>false</organismsDiffer>
    <experiments>3</experiments>
</comment>
<comment type="interaction">
    <interactant intactId="EBI-2055307">
        <id>Q3E840</id>
    </interactant>
    <interactant intactId="EBI-33957">
        <id>Q02908</id>
        <label>ELP3</label>
    </interactant>
    <organismsDiffer>false</organismsDiffer>
    <experiments>3</experiments>
</comment>
<comment type="subcellular location">
    <subcellularLocation>
        <location evidence="3 6">Cytoplasm</location>
    </subcellularLocation>
    <subcellularLocation>
        <location evidence="3 6">Nucleus</location>
    </subcellularLocation>
</comment>
<comment type="domain">
    <text evidence="9">The DPH-type metal-binding (MB) domain can also bind zinc. However, iron is the physiological binding partner as zinc binding impairs the protein electron donor function.</text>
</comment>
<comment type="disruption phenotype">
    <text evidence="6 12">Sensitive to caffeine, paromycin, and thermal stress (PubMed:18627462). Resistance to diphtheria toxin, sordarin and zymocin (PubMed:18627462, PubMed:27694803).</text>
</comment>
<comment type="miscellaneous">
    <text evidence="4">Present with 8400 molecules/cell in log phase SD medium.</text>
</comment>
<comment type="similarity">
    <text evidence="16">Belongs to the DPH3 family.</text>
</comment>
<sequence>MSTYDEIEIEDMTFEPENQMFTYPCPCGDRFQIYLDDMFEGEKVAVCPSCSLMIDVVFDKEDLAEYYEEAGIHPPEPIAAAA</sequence>
<protein>
    <recommendedName>
        <fullName>Diphthamide biosynthesis protein 3</fullName>
    </recommendedName>
    <alternativeName>
        <fullName evidence="15">Kluyveromyces lactis toxin-insensitive protein 11</fullName>
    </alternativeName>
</protein>
<gene>
    <name evidence="15 17" type="primary">KTI11</name>
    <name type="synonym">DPH3</name>
    <name type="ordered locus">YBL071W-A</name>
</gene>